<feature type="chain" id="PRO_0000181149" description="Large ribosomal subunit protein bL27">
    <location>
        <begin position="1"/>
        <end position="91"/>
    </location>
</feature>
<protein>
    <recommendedName>
        <fullName evidence="1">Large ribosomal subunit protein bL27</fullName>
    </recommendedName>
    <alternativeName>
        <fullName evidence="2">50S ribosomal protein L27</fullName>
    </alternativeName>
</protein>
<evidence type="ECO:0000255" key="1">
    <source>
        <dbReference type="HAMAP-Rule" id="MF_00539"/>
    </source>
</evidence>
<evidence type="ECO:0000305" key="2"/>
<comment type="similarity">
    <text evidence="1">Belongs to the bacterial ribosomal protein bL27 family.</text>
</comment>
<proteinExistence type="inferred from homology"/>
<accession>Q889F2</accession>
<dbReference type="EMBL" id="AE016853">
    <property type="protein sequence ID" value="AAO54340.1"/>
    <property type="molecule type" value="Genomic_DNA"/>
</dbReference>
<dbReference type="RefSeq" id="NP_790645.1">
    <property type="nucleotide sequence ID" value="NC_004578.1"/>
</dbReference>
<dbReference type="RefSeq" id="WP_002551972.1">
    <property type="nucleotide sequence ID" value="NC_004578.1"/>
</dbReference>
<dbReference type="SMR" id="Q889F2"/>
<dbReference type="STRING" id="223283.PSPTO_0798"/>
<dbReference type="GeneID" id="96217044"/>
<dbReference type="KEGG" id="pst:PSPTO_0798"/>
<dbReference type="PATRIC" id="fig|223283.9.peg.811"/>
<dbReference type="eggNOG" id="COG0211">
    <property type="taxonomic scope" value="Bacteria"/>
</dbReference>
<dbReference type="HOGENOM" id="CLU_095424_4_1_6"/>
<dbReference type="OrthoDB" id="9803474at2"/>
<dbReference type="PhylomeDB" id="Q889F2"/>
<dbReference type="Proteomes" id="UP000002515">
    <property type="component" value="Chromosome"/>
</dbReference>
<dbReference type="GO" id="GO:0022625">
    <property type="term" value="C:cytosolic large ribosomal subunit"/>
    <property type="evidence" value="ECO:0007669"/>
    <property type="project" value="TreeGrafter"/>
</dbReference>
<dbReference type="GO" id="GO:0003735">
    <property type="term" value="F:structural constituent of ribosome"/>
    <property type="evidence" value="ECO:0007669"/>
    <property type="project" value="InterPro"/>
</dbReference>
<dbReference type="GO" id="GO:0006412">
    <property type="term" value="P:translation"/>
    <property type="evidence" value="ECO:0007669"/>
    <property type="project" value="UniProtKB-UniRule"/>
</dbReference>
<dbReference type="FunFam" id="2.40.50.100:FF:000001">
    <property type="entry name" value="50S ribosomal protein L27"/>
    <property type="match status" value="1"/>
</dbReference>
<dbReference type="Gene3D" id="2.40.50.100">
    <property type="match status" value="1"/>
</dbReference>
<dbReference type="HAMAP" id="MF_00539">
    <property type="entry name" value="Ribosomal_bL27"/>
    <property type="match status" value="1"/>
</dbReference>
<dbReference type="InterPro" id="IPR001684">
    <property type="entry name" value="Ribosomal_bL27"/>
</dbReference>
<dbReference type="InterPro" id="IPR018261">
    <property type="entry name" value="Ribosomal_bL27_CS"/>
</dbReference>
<dbReference type="NCBIfam" id="TIGR00062">
    <property type="entry name" value="L27"/>
    <property type="match status" value="1"/>
</dbReference>
<dbReference type="PANTHER" id="PTHR15893:SF0">
    <property type="entry name" value="LARGE RIBOSOMAL SUBUNIT PROTEIN BL27M"/>
    <property type="match status" value="1"/>
</dbReference>
<dbReference type="PANTHER" id="PTHR15893">
    <property type="entry name" value="RIBOSOMAL PROTEIN L27"/>
    <property type="match status" value="1"/>
</dbReference>
<dbReference type="Pfam" id="PF01016">
    <property type="entry name" value="Ribosomal_L27"/>
    <property type="match status" value="1"/>
</dbReference>
<dbReference type="PRINTS" id="PR00063">
    <property type="entry name" value="RIBOSOMALL27"/>
</dbReference>
<dbReference type="SUPFAM" id="SSF110324">
    <property type="entry name" value="Ribosomal L27 protein-like"/>
    <property type="match status" value="1"/>
</dbReference>
<dbReference type="PROSITE" id="PS00831">
    <property type="entry name" value="RIBOSOMAL_L27"/>
    <property type="match status" value="1"/>
</dbReference>
<keyword id="KW-1185">Reference proteome</keyword>
<keyword id="KW-0687">Ribonucleoprotein</keyword>
<keyword id="KW-0689">Ribosomal protein</keyword>
<name>RL27_PSESM</name>
<sequence>MAHKKAGGSTRNGRDSEAKRLGVKMYGGQAIIPGNIIVRQRGTQFHAGYGVGMGKDHTLFAKVEGVIKFQVKGAFGRRYVSIVPKTEVSAA</sequence>
<reference key="1">
    <citation type="journal article" date="2003" name="Proc. Natl. Acad. Sci. U.S.A.">
        <title>The complete genome sequence of the Arabidopsis and tomato pathogen Pseudomonas syringae pv. tomato DC3000.</title>
        <authorList>
            <person name="Buell C.R."/>
            <person name="Joardar V."/>
            <person name="Lindeberg M."/>
            <person name="Selengut J."/>
            <person name="Paulsen I.T."/>
            <person name="Gwinn M.L."/>
            <person name="Dodson R.J."/>
            <person name="DeBoy R.T."/>
            <person name="Durkin A.S."/>
            <person name="Kolonay J.F."/>
            <person name="Madupu R."/>
            <person name="Daugherty S.C."/>
            <person name="Brinkac L.M."/>
            <person name="Beanan M.J."/>
            <person name="Haft D.H."/>
            <person name="Nelson W.C."/>
            <person name="Davidsen T.M."/>
            <person name="Zafar N."/>
            <person name="Zhou L."/>
            <person name="Liu J."/>
            <person name="Yuan Q."/>
            <person name="Khouri H.M."/>
            <person name="Fedorova N.B."/>
            <person name="Tran B."/>
            <person name="Russell D."/>
            <person name="Berry K.J."/>
            <person name="Utterback T.R."/>
            <person name="Van Aken S.E."/>
            <person name="Feldblyum T.V."/>
            <person name="D'Ascenzo M."/>
            <person name="Deng W.-L."/>
            <person name="Ramos A.R."/>
            <person name="Alfano J.R."/>
            <person name="Cartinhour S."/>
            <person name="Chatterjee A.K."/>
            <person name="Delaney T.P."/>
            <person name="Lazarowitz S.G."/>
            <person name="Martin G.B."/>
            <person name="Schneider D.J."/>
            <person name="Tang X."/>
            <person name="Bender C.L."/>
            <person name="White O."/>
            <person name="Fraser C.M."/>
            <person name="Collmer A."/>
        </authorList>
    </citation>
    <scope>NUCLEOTIDE SEQUENCE [LARGE SCALE GENOMIC DNA]</scope>
    <source>
        <strain>ATCC BAA-871 / DC3000</strain>
    </source>
</reference>
<gene>
    <name evidence="1" type="primary">rpmA</name>
    <name type="ordered locus">PSPTO_0798</name>
</gene>
<organism>
    <name type="scientific">Pseudomonas syringae pv. tomato (strain ATCC BAA-871 / DC3000)</name>
    <dbReference type="NCBI Taxonomy" id="223283"/>
    <lineage>
        <taxon>Bacteria</taxon>
        <taxon>Pseudomonadati</taxon>
        <taxon>Pseudomonadota</taxon>
        <taxon>Gammaproteobacteria</taxon>
        <taxon>Pseudomonadales</taxon>
        <taxon>Pseudomonadaceae</taxon>
        <taxon>Pseudomonas</taxon>
    </lineage>
</organism>